<sequence>MLLTNILCLMMPILLAVAFLTLTERKILGHMQLRKGPNTVGPHGLLQPVADAVKLFTKEPLHPLTSSKLMFIIAPTLAFTLALSLWAPLPMPHPLINLNLSILFILAMSSLAVHSILWSGWASNSKYALIGALRAVAQTISYEVTLAIILLSIMLINGSFTLSTLTITQEQMWLILPTWPLAMMWFISTLAETNRTPFDLSEGESELVSGFNVEYAAGPFALFFMAEYTNIILMNALTATLFFGAFHNPLFPELHTINLTTKTLILVFLFLWIRASYPRFRYDQLMHLLWKNFLPLTLALCTWHMTMPISLAGIPPQT</sequence>
<reference key="1">
    <citation type="journal article" date="1998" name="J. Mol. Evol.">
        <title>Conflict among individual mitochondrial proteins in resolving the phylogeny of eutherian orders.</title>
        <authorList>
            <person name="Cao Y."/>
            <person name="Janke A."/>
            <person name="Waddell P.J."/>
            <person name="Westerman M."/>
            <person name="Takenaka O."/>
            <person name="Murata S."/>
            <person name="Okada N."/>
            <person name="Paeaebo S."/>
            <person name="Hasegawa M."/>
        </authorList>
    </citation>
    <scope>NUCLEOTIDE SEQUENCE [GENOMIC DNA]</scope>
    <source>
        <tissue>Liver</tissue>
    </source>
</reference>
<geneLocation type="mitochondrion"/>
<proteinExistence type="inferred from homology"/>
<evidence type="ECO:0000250" key="1"/>
<evidence type="ECO:0000255" key="2"/>
<evidence type="ECO:0000305" key="3"/>
<accession>O78701</accession>
<gene>
    <name type="primary">MT-ND1</name>
    <name type="synonym">MTND1</name>
    <name type="synonym">NADH1</name>
    <name type="synonym">ND1</name>
</gene>
<protein>
    <recommendedName>
        <fullName>NADH-ubiquinone oxidoreductase chain 1</fullName>
        <ecNumber>7.1.1.2</ecNumber>
    </recommendedName>
    <alternativeName>
        <fullName>NADH dehydrogenase subunit 1</fullName>
    </alternativeName>
</protein>
<name>NU1M_BRAVA</name>
<comment type="function">
    <text evidence="1">Core subunit of the mitochondrial membrane respiratory chain NADH dehydrogenase (Complex I) that is believed to belong to the minimal assembly required for catalysis. Complex I functions in the transfer of electrons from NADH to the respiratory chain. The immediate electron acceptor for the enzyme is believed to be ubiquinone (By similarity).</text>
</comment>
<comment type="catalytic activity">
    <reaction>
        <text>a ubiquinone + NADH + 5 H(+)(in) = a ubiquinol + NAD(+) + 4 H(+)(out)</text>
        <dbReference type="Rhea" id="RHEA:29091"/>
        <dbReference type="Rhea" id="RHEA-COMP:9565"/>
        <dbReference type="Rhea" id="RHEA-COMP:9566"/>
        <dbReference type="ChEBI" id="CHEBI:15378"/>
        <dbReference type="ChEBI" id="CHEBI:16389"/>
        <dbReference type="ChEBI" id="CHEBI:17976"/>
        <dbReference type="ChEBI" id="CHEBI:57540"/>
        <dbReference type="ChEBI" id="CHEBI:57945"/>
        <dbReference type="EC" id="7.1.1.2"/>
    </reaction>
</comment>
<comment type="subcellular location">
    <subcellularLocation>
        <location evidence="1">Mitochondrion inner membrane</location>
        <topology evidence="1">Multi-pass membrane protein</topology>
    </subcellularLocation>
</comment>
<comment type="similarity">
    <text evidence="3">Belongs to the complex I subunit 1 family.</text>
</comment>
<keyword id="KW-0249">Electron transport</keyword>
<keyword id="KW-0472">Membrane</keyword>
<keyword id="KW-0496">Mitochondrion</keyword>
<keyword id="KW-0999">Mitochondrion inner membrane</keyword>
<keyword id="KW-0520">NAD</keyword>
<keyword id="KW-0679">Respiratory chain</keyword>
<keyword id="KW-1278">Translocase</keyword>
<keyword id="KW-0812">Transmembrane</keyword>
<keyword id="KW-1133">Transmembrane helix</keyword>
<keyword id="KW-0813">Transport</keyword>
<keyword id="KW-0830">Ubiquinone</keyword>
<organism>
    <name type="scientific">Bradypus variegatus</name>
    <name type="common">Brown-throated three-fingered sloth</name>
    <dbReference type="NCBI Taxonomy" id="9355"/>
    <lineage>
        <taxon>Eukaryota</taxon>
        <taxon>Metazoa</taxon>
        <taxon>Chordata</taxon>
        <taxon>Craniata</taxon>
        <taxon>Vertebrata</taxon>
        <taxon>Euteleostomi</taxon>
        <taxon>Mammalia</taxon>
        <taxon>Eutheria</taxon>
        <taxon>Xenarthra</taxon>
        <taxon>Pilosa</taxon>
        <taxon>Folivora</taxon>
        <taxon>Bradypodidae</taxon>
        <taxon>Bradypus</taxon>
    </lineage>
</organism>
<dbReference type="EC" id="7.1.1.2"/>
<dbReference type="EMBL" id="AB011218">
    <property type="protein sequence ID" value="BAA32110.1"/>
    <property type="molecule type" value="Genomic_DNA"/>
</dbReference>
<dbReference type="RefSeq" id="YP_009182338.1">
    <property type="nucleotide sequence ID" value="NC_028501.1"/>
</dbReference>
<dbReference type="SMR" id="O78701"/>
<dbReference type="GeneID" id="26374076"/>
<dbReference type="CTD" id="4535"/>
<dbReference type="GO" id="GO:0005743">
    <property type="term" value="C:mitochondrial inner membrane"/>
    <property type="evidence" value="ECO:0007669"/>
    <property type="project" value="UniProtKB-SubCell"/>
</dbReference>
<dbReference type="GO" id="GO:0008137">
    <property type="term" value="F:NADH dehydrogenase (ubiquinone) activity"/>
    <property type="evidence" value="ECO:0007669"/>
    <property type="project" value="UniProtKB-EC"/>
</dbReference>
<dbReference type="GO" id="GO:0009060">
    <property type="term" value="P:aerobic respiration"/>
    <property type="evidence" value="ECO:0007669"/>
    <property type="project" value="TreeGrafter"/>
</dbReference>
<dbReference type="HAMAP" id="MF_01350">
    <property type="entry name" value="NDH1_NuoH"/>
    <property type="match status" value="1"/>
</dbReference>
<dbReference type="InterPro" id="IPR001694">
    <property type="entry name" value="NADH_UbQ_OxRdtase_su1/FPO"/>
</dbReference>
<dbReference type="InterPro" id="IPR018086">
    <property type="entry name" value="NADH_UbQ_OxRdtase_su1_CS"/>
</dbReference>
<dbReference type="PANTHER" id="PTHR11432">
    <property type="entry name" value="NADH DEHYDROGENASE SUBUNIT 1"/>
    <property type="match status" value="1"/>
</dbReference>
<dbReference type="PANTHER" id="PTHR11432:SF3">
    <property type="entry name" value="NADH-UBIQUINONE OXIDOREDUCTASE CHAIN 1"/>
    <property type="match status" value="1"/>
</dbReference>
<dbReference type="Pfam" id="PF00146">
    <property type="entry name" value="NADHdh"/>
    <property type="match status" value="1"/>
</dbReference>
<dbReference type="PROSITE" id="PS00667">
    <property type="entry name" value="COMPLEX1_ND1_1"/>
    <property type="match status" value="1"/>
</dbReference>
<dbReference type="PROSITE" id="PS00668">
    <property type="entry name" value="COMPLEX1_ND1_2"/>
    <property type="match status" value="1"/>
</dbReference>
<feature type="chain" id="PRO_0000117358" description="NADH-ubiquinone oxidoreductase chain 1">
    <location>
        <begin position="1"/>
        <end position="318"/>
    </location>
</feature>
<feature type="transmembrane region" description="Helical" evidence="2">
    <location>
        <begin position="2"/>
        <end position="22"/>
    </location>
</feature>
<feature type="transmembrane region" description="Helical" evidence="2">
    <location>
        <begin position="69"/>
        <end position="89"/>
    </location>
</feature>
<feature type="transmembrane region" description="Helical" evidence="2">
    <location>
        <begin position="102"/>
        <end position="122"/>
    </location>
</feature>
<feature type="transmembrane region" description="Helical" evidence="2">
    <location>
        <begin position="147"/>
        <end position="167"/>
    </location>
</feature>
<feature type="transmembrane region" description="Helical" evidence="2">
    <location>
        <begin position="172"/>
        <end position="192"/>
    </location>
</feature>
<feature type="transmembrane region" description="Helical" evidence="2">
    <location>
        <begin position="231"/>
        <end position="251"/>
    </location>
</feature>
<feature type="transmembrane region" description="Helical" evidence="2">
    <location>
        <begin position="253"/>
        <end position="273"/>
    </location>
</feature>
<feature type="transmembrane region" description="Helical" evidence="2">
    <location>
        <begin position="294"/>
        <end position="314"/>
    </location>
</feature>